<organism>
    <name type="scientific">Pseudomonas fluorescens (strain ATCC BAA-477 / NRRL B-23932 / Pf-5)</name>
    <dbReference type="NCBI Taxonomy" id="220664"/>
    <lineage>
        <taxon>Bacteria</taxon>
        <taxon>Pseudomonadati</taxon>
        <taxon>Pseudomonadota</taxon>
        <taxon>Gammaproteobacteria</taxon>
        <taxon>Pseudomonadales</taxon>
        <taxon>Pseudomonadaceae</taxon>
        <taxon>Pseudomonas</taxon>
    </lineage>
</organism>
<comment type="function">
    <text evidence="1">Involved in the de novo purine biosynthesis. Catalyzes the transfer of formate to 5-phospho-ribosyl-glycinamide (GAR), producing 5-phospho-ribosyl-N-formylglycinamide (FGAR). Formate is provided by PurU via hydrolysis of 10-formyl-tetrahydrofolate.</text>
</comment>
<comment type="catalytic activity">
    <reaction evidence="1">
        <text>N(1)-(5-phospho-beta-D-ribosyl)glycinamide + formate + ATP = N(2)-formyl-N(1)-(5-phospho-beta-D-ribosyl)glycinamide + ADP + phosphate + H(+)</text>
        <dbReference type="Rhea" id="RHEA:24829"/>
        <dbReference type="ChEBI" id="CHEBI:15378"/>
        <dbReference type="ChEBI" id="CHEBI:15740"/>
        <dbReference type="ChEBI" id="CHEBI:30616"/>
        <dbReference type="ChEBI" id="CHEBI:43474"/>
        <dbReference type="ChEBI" id="CHEBI:143788"/>
        <dbReference type="ChEBI" id="CHEBI:147286"/>
        <dbReference type="ChEBI" id="CHEBI:456216"/>
        <dbReference type="EC" id="6.3.1.21"/>
    </reaction>
    <physiologicalReaction direction="left-to-right" evidence="1">
        <dbReference type="Rhea" id="RHEA:24830"/>
    </physiologicalReaction>
</comment>
<comment type="pathway">
    <text evidence="1">Purine metabolism; IMP biosynthesis via de novo pathway; N(2)-formyl-N(1)-(5-phospho-D-ribosyl)glycinamide from N(1)-(5-phospho-D-ribosyl)glycinamide (formate route): step 1/1.</text>
</comment>
<comment type="subunit">
    <text evidence="1">Homodimer.</text>
</comment>
<comment type="similarity">
    <text evidence="1">Belongs to the PurK/PurT family.</text>
</comment>
<sequence length="393" mass="42337">MTRIGTPLSPTATRVLLCGCGELGKEVVIELQRLGVEVIAVDRYANAPAMQVAHRSHVINMLDGAALRAVIEAEKPHFIVPEIEAIATATLVELEAEGFTVIPTARATSLTMNREGIRRLAAEELDLPTSPYHFADTFEDYSRAVQDLGFPCVVKPVMSSSGKGQSLLRSVDDVQKAWDYAQEGGRAGKGRVIIEGFIDFDYEITLLTVRHVGGTTFCAPVGHRQEKGDYQESWQPQAMSPKALAESERVAKAVTEALGGRGLFGVELFIKGDQVWFSEVSPRPHDTGLVTLISQDLSQFALHARAILGLPIPLIRQFGPSASAVILVEGTSTQTAFANLGAALSEPDTALRLFGKPEVNGQRRMGVALARDESIEAARAKATRAAQAVVVEL</sequence>
<dbReference type="EC" id="6.3.1.21" evidence="1"/>
<dbReference type="EMBL" id="CP000076">
    <property type="protein sequence ID" value="AAY90376.1"/>
    <property type="molecule type" value="Genomic_DNA"/>
</dbReference>
<dbReference type="RefSeq" id="WP_011059439.1">
    <property type="nucleotide sequence ID" value="NC_004129.6"/>
</dbReference>
<dbReference type="SMR" id="Q4KHR3"/>
<dbReference type="STRING" id="220664.PFL_1089"/>
<dbReference type="KEGG" id="pfl:PFL_1089"/>
<dbReference type="PATRIC" id="fig|220664.5.peg.1118"/>
<dbReference type="eggNOG" id="COG0027">
    <property type="taxonomic scope" value="Bacteria"/>
</dbReference>
<dbReference type="HOGENOM" id="CLU_011534_1_3_6"/>
<dbReference type="UniPathway" id="UPA00074">
    <property type="reaction ID" value="UER00127"/>
</dbReference>
<dbReference type="Proteomes" id="UP000008540">
    <property type="component" value="Chromosome"/>
</dbReference>
<dbReference type="GO" id="GO:0005829">
    <property type="term" value="C:cytosol"/>
    <property type="evidence" value="ECO:0007669"/>
    <property type="project" value="TreeGrafter"/>
</dbReference>
<dbReference type="GO" id="GO:0005524">
    <property type="term" value="F:ATP binding"/>
    <property type="evidence" value="ECO:0007669"/>
    <property type="project" value="UniProtKB-UniRule"/>
</dbReference>
<dbReference type="GO" id="GO:0000287">
    <property type="term" value="F:magnesium ion binding"/>
    <property type="evidence" value="ECO:0007669"/>
    <property type="project" value="InterPro"/>
</dbReference>
<dbReference type="GO" id="GO:0043815">
    <property type="term" value="F:phosphoribosylglycinamide formyltransferase 2 activity"/>
    <property type="evidence" value="ECO:0007669"/>
    <property type="project" value="UniProtKB-UniRule"/>
</dbReference>
<dbReference type="GO" id="GO:0004644">
    <property type="term" value="F:phosphoribosylglycinamide formyltransferase activity"/>
    <property type="evidence" value="ECO:0007669"/>
    <property type="project" value="InterPro"/>
</dbReference>
<dbReference type="GO" id="GO:0006189">
    <property type="term" value="P:'de novo' IMP biosynthetic process"/>
    <property type="evidence" value="ECO:0007669"/>
    <property type="project" value="UniProtKB-UniRule"/>
</dbReference>
<dbReference type="FunFam" id="3.30.1490.20:FF:000013">
    <property type="entry name" value="Formate-dependent phosphoribosylglycinamide formyltransferase"/>
    <property type="match status" value="1"/>
</dbReference>
<dbReference type="FunFam" id="3.30.470.20:FF:000027">
    <property type="entry name" value="Formate-dependent phosphoribosylglycinamide formyltransferase"/>
    <property type="match status" value="1"/>
</dbReference>
<dbReference type="FunFam" id="3.40.50.20:FF:000007">
    <property type="entry name" value="Formate-dependent phosphoribosylglycinamide formyltransferase"/>
    <property type="match status" value="1"/>
</dbReference>
<dbReference type="Gene3D" id="3.40.50.20">
    <property type="match status" value="1"/>
</dbReference>
<dbReference type="Gene3D" id="3.30.1490.20">
    <property type="entry name" value="ATP-grasp fold, A domain"/>
    <property type="match status" value="1"/>
</dbReference>
<dbReference type="Gene3D" id="3.30.470.20">
    <property type="entry name" value="ATP-grasp fold, B domain"/>
    <property type="match status" value="1"/>
</dbReference>
<dbReference type="HAMAP" id="MF_01643">
    <property type="entry name" value="PurT"/>
    <property type="match status" value="1"/>
</dbReference>
<dbReference type="InterPro" id="IPR011761">
    <property type="entry name" value="ATP-grasp"/>
</dbReference>
<dbReference type="InterPro" id="IPR003135">
    <property type="entry name" value="ATP-grasp_carboxylate-amine"/>
</dbReference>
<dbReference type="InterPro" id="IPR013815">
    <property type="entry name" value="ATP_grasp_subdomain_1"/>
</dbReference>
<dbReference type="InterPro" id="IPR016185">
    <property type="entry name" value="PreATP-grasp_dom_sf"/>
</dbReference>
<dbReference type="InterPro" id="IPR005862">
    <property type="entry name" value="PurT"/>
</dbReference>
<dbReference type="InterPro" id="IPR054350">
    <property type="entry name" value="PurT/PurK_preATP-grasp"/>
</dbReference>
<dbReference type="InterPro" id="IPR048740">
    <property type="entry name" value="PurT_C"/>
</dbReference>
<dbReference type="NCBIfam" id="NF006766">
    <property type="entry name" value="PRK09288.1"/>
    <property type="match status" value="1"/>
</dbReference>
<dbReference type="NCBIfam" id="TIGR01142">
    <property type="entry name" value="purT"/>
    <property type="match status" value="1"/>
</dbReference>
<dbReference type="PANTHER" id="PTHR43055">
    <property type="entry name" value="FORMATE-DEPENDENT PHOSPHORIBOSYLGLYCINAMIDE FORMYLTRANSFERASE"/>
    <property type="match status" value="1"/>
</dbReference>
<dbReference type="PANTHER" id="PTHR43055:SF1">
    <property type="entry name" value="FORMATE-DEPENDENT PHOSPHORIBOSYLGLYCINAMIDE FORMYLTRANSFERASE"/>
    <property type="match status" value="1"/>
</dbReference>
<dbReference type="Pfam" id="PF02222">
    <property type="entry name" value="ATP-grasp"/>
    <property type="match status" value="1"/>
</dbReference>
<dbReference type="Pfam" id="PF21244">
    <property type="entry name" value="PurT_C"/>
    <property type="match status" value="1"/>
</dbReference>
<dbReference type="Pfam" id="PF22660">
    <property type="entry name" value="RS_preATP-grasp-like"/>
    <property type="match status" value="1"/>
</dbReference>
<dbReference type="SUPFAM" id="SSF56059">
    <property type="entry name" value="Glutathione synthetase ATP-binding domain-like"/>
    <property type="match status" value="1"/>
</dbReference>
<dbReference type="SUPFAM" id="SSF52440">
    <property type="entry name" value="PreATP-grasp domain"/>
    <property type="match status" value="1"/>
</dbReference>
<dbReference type="PROSITE" id="PS50975">
    <property type="entry name" value="ATP_GRASP"/>
    <property type="match status" value="1"/>
</dbReference>
<proteinExistence type="inferred from homology"/>
<reference key="1">
    <citation type="journal article" date="2005" name="Nat. Biotechnol.">
        <title>Complete genome sequence of the plant commensal Pseudomonas fluorescens Pf-5.</title>
        <authorList>
            <person name="Paulsen I.T."/>
            <person name="Press C.M."/>
            <person name="Ravel J."/>
            <person name="Kobayashi D.Y."/>
            <person name="Myers G.S.A."/>
            <person name="Mavrodi D.V."/>
            <person name="DeBoy R.T."/>
            <person name="Seshadri R."/>
            <person name="Ren Q."/>
            <person name="Madupu R."/>
            <person name="Dodson R.J."/>
            <person name="Durkin A.S."/>
            <person name="Brinkac L.M."/>
            <person name="Daugherty S.C."/>
            <person name="Sullivan S.A."/>
            <person name="Rosovitz M.J."/>
            <person name="Gwinn M.L."/>
            <person name="Zhou L."/>
            <person name="Schneider D.J."/>
            <person name="Cartinhour S.W."/>
            <person name="Nelson W.C."/>
            <person name="Weidman J."/>
            <person name="Watkins K."/>
            <person name="Tran K."/>
            <person name="Khouri H."/>
            <person name="Pierson E.A."/>
            <person name="Pierson L.S. III"/>
            <person name="Thomashow L.S."/>
            <person name="Loper J.E."/>
        </authorList>
    </citation>
    <scope>NUCLEOTIDE SEQUENCE [LARGE SCALE GENOMIC DNA]</scope>
    <source>
        <strain>ATCC BAA-477 / NRRL B-23932 / Pf-5</strain>
    </source>
</reference>
<evidence type="ECO:0000255" key="1">
    <source>
        <dbReference type="HAMAP-Rule" id="MF_01643"/>
    </source>
</evidence>
<keyword id="KW-0067">ATP-binding</keyword>
<keyword id="KW-0436">Ligase</keyword>
<keyword id="KW-0460">Magnesium</keyword>
<keyword id="KW-0479">Metal-binding</keyword>
<keyword id="KW-0547">Nucleotide-binding</keyword>
<keyword id="KW-0658">Purine biosynthesis</keyword>
<name>PURT_PSEF5</name>
<protein>
    <recommendedName>
        <fullName evidence="1">Formate-dependent phosphoribosylglycinamide formyltransferase</fullName>
        <ecNumber evidence="1">6.3.1.21</ecNumber>
    </recommendedName>
    <alternativeName>
        <fullName evidence="1">5'-phosphoribosylglycinamide transformylase 2</fullName>
    </alternativeName>
    <alternativeName>
        <fullName evidence="1">Formate-dependent GAR transformylase</fullName>
    </alternativeName>
    <alternativeName>
        <fullName evidence="1">GAR transformylase 2</fullName>
        <shortName evidence="1">GART 2</shortName>
    </alternativeName>
    <alternativeName>
        <fullName evidence="1">Non-folate glycinamide ribonucleotide transformylase</fullName>
    </alternativeName>
    <alternativeName>
        <fullName evidence="1">Phosphoribosylglycinamide formyltransferase 2</fullName>
    </alternativeName>
</protein>
<gene>
    <name evidence="1" type="primary">purT</name>
    <name type="ordered locus">PFL_1089</name>
</gene>
<feature type="chain" id="PRO_0000319211" description="Formate-dependent phosphoribosylglycinamide formyltransferase">
    <location>
        <begin position="1"/>
        <end position="393"/>
    </location>
</feature>
<feature type="domain" description="ATP-grasp" evidence="1">
    <location>
        <begin position="119"/>
        <end position="308"/>
    </location>
</feature>
<feature type="binding site" evidence="1">
    <location>
        <begin position="22"/>
        <end position="23"/>
    </location>
    <ligand>
        <name>N(1)-(5-phospho-beta-D-ribosyl)glycinamide</name>
        <dbReference type="ChEBI" id="CHEBI:143788"/>
    </ligand>
</feature>
<feature type="binding site" evidence="1">
    <location>
        <position position="82"/>
    </location>
    <ligand>
        <name>N(1)-(5-phospho-beta-D-ribosyl)glycinamide</name>
        <dbReference type="ChEBI" id="CHEBI:143788"/>
    </ligand>
</feature>
<feature type="binding site" evidence="1">
    <location>
        <position position="114"/>
    </location>
    <ligand>
        <name>ATP</name>
        <dbReference type="ChEBI" id="CHEBI:30616"/>
    </ligand>
</feature>
<feature type="binding site" evidence="1">
    <location>
        <position position="155"/>
    </location>
    <ligand>
        <name>ATP</name>
        <dbReference type="ChEBI" id="CHEBI:30616"/>
    </ligand>
</feature>
<feature type="binding site" evidence="1">
    <location>
        <begin position="160"/>
        <end position="165"/>
    </location>
    <ligand>
        <name>ATP</name>
        <dbReference type="ChEBI" id="CHEBI:30616"/>
    </ligand>
</feature>
<feature type="binding site" evidence="1">
    <location>
        <begin position="195"/>
        <end position="198"/>
    </location>
    <ligand>
        <name>ATP</name>
        <dbReference type="ChEBI" id="CHEBI:30616"/>
    </ligand>
</feature>
<feature type="binding site" evidence="1">
    <location>
        <position position="203"/>
    </location>
    <ligand>
        <name>ATP</name>
        <dbReference type="ChEBI" id="CHEBI:30616"/>
    </ligand>
</feature>
<feature type="binding site" evidence="1">
    <location>
        <position position="267"/>
    </location>
    <ligand>
        <name>Mg(2+)</name>
        <dbReference type="ChEBI" id="CHEBI:18420"/>
    </ligand>
</feature>
<feature type="binding site" evidence="1">
    <location>
        <position position="279"/>
    </location>
    <ligand>
        <name>Mg(2+)</name>
        <dbReference type="ChEBI" id="CHEBI:18420"/>
    </ligand>
</feature>
<feature type="binding site" evidence="1">
    <location>
        <position position="286"/>
    </location>
    <ligand>
        <name>N(1)-(5-phospho-beta-D-ribosyl)glycinamide</name>
        <dbReference type="ChEBI" id="CHEBI:143788"/>
    </ligand>
</feature>
<feature type="binding site" evidence="1">
    <location>
        <position position="356"/>
    </location>
    <ligand>
        <name>N(1)-(5-phospho-beta-D-ribosyl)glycinamide</name>
        <dbReference type="ChEBI" id="CHEBI:143788"/>
    </ligand>
</feature>
<feature type="binding site" evidence="1">
    <location>
        <begin position="363"/>
        <end position="364"/>
    </location>
    <ligand>
        <name>N(1)-(5-phospho-beta-D-ribosyl)glycinamide</name>
        <dbReference type="ChEBI" id="CHEBI:143788"/>
    </ligand>
</feature>
<accession>Q4KHR3</accession>